<gene>
    <name evidence="1" type="primary">rpsB</name>
    <name type="ordered locus">Fjoh_1610</name>
</gene>
<comment type="similarity">
    <text evidence="1">Belongs to the universal ribosomal protein uS2 family.</text>
</comment>
<reference key="1">
    <citation type="journal article" date="2009" name="Appl. Environ. Microbiol.">
        <title>Novel features of the polysaccharide-digesting gliding bacterium Flavobacterium johnsoniae as revealed by genome sequence analysis.</title>
        <authorList>
            <person name="McBride M.J."/>
            <person name="Xie G."/>
            <person name="Martens E.C."/>
            <person name="Lapidus A."/>
            <person name="Henrissat B."/>
            <person name="Rhodes R.G."/>
            <person name="Goltsman E."/>
            <person name="Wang W."/>
            <person name="Xu J."/>
            <person name="Hunnicutt D.W."/>
            <person name="Staroscik A.M."/>
            <person name="Hoover T.R."/>
            <person name="Cheng Y.Q."/>
            <person name="Stein J.L."/>
        </authorList>
    </citation>
    <scope>NUCLEOTIDE SEQUENCE [LARGE SCALE GENOMIC DNA]</scope>
    <source>
        <strain>ATCC 17061 / DSM 2064 / JCM 8514 / BCRC 14874 / CCUG 350202 / NBRC 14942 / NCIMB 11054 / UW101</strain>
    </source>
</reference>
<name>RS2_FLAJ1</name>
<evidence type="ECO:0000255" key="1">
    <source>
        <dbReference type="HAMAP-Rule" id="MF_00291"/>
    </source>
</evidence>
<evidence type="ECO:0000256" key="2">
    <source>
        <dbReference type="SAM" id="MobiDB-lite"/>
    </source>
</evidence>
<evidence type="ECO:0000305" key="3"/>
<organism>
    <name type="scientific">Flavobacterium johnsoniae (strain ATCC 17061 / DSM 2064 / JCM 8514 / BCRC 14874 / CCUG 350202 / NBRC 14942 / NCIMB 11054 / UW101)</name>
    <name type="common">Cytophaga johnsonae</name>
    <dbReference type="NCBI Taxonomy" id="376686"/>
    <lineage>
        <taxon>Bacteria</taxon>
        <taxon>Pseudomonadati</taxon>
        <taxon>Bacteroidota</taxon>
        <taxon>Flavobacteriia</taxon>
        <taxon>Flavobacteriales</taxon>
        <taxon>Flavobacteriaceae</taxon>
        <taxon>Flavobacterium</taxon>
    </lineage>
</organism>
<accession>A5FJG9</accession>
<keyword id="KW-0687">Ribonucleoprotein</keyword>
<keyword id="KW-0689">Ribosomal protein</keyword>
<proteinExistence type="inferred from homology"/>
<feature type="chain" id="PRO_1000078881" description="Small ribosomal subunit protein uS2">
    <location>
        <begin position="1"/>
        <end position="254"/>
    </location>
</feature>
<feature type="region of interest" description="Disordered" evidence="2">
    <location>
        <begin position="228"/>
        <end position="254"/>
    </location>
</feature>
<feature type="compositionally biased region" description="Low complexity" evidence="2">
    <location>
        <begin position="240"/>
        <end position="254"/>
    </location>
</feature>
<dbReference type="EMBL" id="CP000685">
    <property type="protein sequence ID" value="ABQ04642.1"/>
    <property type="molecule type" value="Genomic_DNA"/>
</dbReference>
<dbReference type="RefSeq" id="WP_012023686.1">
    <property type="nucleotide sequence ID" value="NZ_MUGZ01000017.1"/>
</dbReference>
<dbReference type="SMR" id="A5FJG9"/>
<dbReference type="STRING" id="376686.Fjoh_1610"/>
<dbReference type="KEGG" id="fjo:Fjoh_1610"/>
<dbReference type="eggNOG" id="COG0052">
    <property type="taxonomic scope" value="Bacteria"/>
</dbReference>
<dbReference type="HOGENOM" id="CLU_040318_0_2_10"/>
<dbReference type="OrthoDB" id="9808036at2"/>
<dbReference type="Proteomes" id="UP000006694">
    <property type="component" value="Chromosome"/>
</dbReference>
<dbReference type="GO" id="GO:0022627">
    <property type="term" value="C:cytosolic small ribosomal subunit"/>
    <property type="evidence" value="ECO:0007669"/>
    <property type="project" value="TreeGrafter"/>
</dbReference>
<dbReference type="GO" id="GO:0003735">
    <property type="term" value="F:structural constituent of ribosome"/>
    <property type="evidence" value="ECO:0007669"/>
    <property type="project" value="InterPro"/>
</dbReference>
<dbReference type="GO" id="GO:0006412">
    <property type="term" value="P:translation"/>
    <property type="evidence" value="ECO:0007669"/>
    <property type="project" value="UniProtKB-UniRule"/>
</dbReference>
<dbReference type="CDD" id="cd01425">
    <property type="entry name" value="RPS2"/>
    <property type="match status" value="1"/>
</dbReference>
<dbReference type="FunFam" id="1.10.287.610:FF:000001">
    <property type="entry name" value="30S ribosomal protein S2"/>
    <property type="match status" value="1"/>
</dbReference>
<dbReference type="Gene3D" id="3.40.50.10490">
    <property type="entry name" value="Glucose-6-phosphate isomerase like protein, domain 1"/>
    <property type="match status" value="1"/>
</dbReference>
<dbReference type="Gene3D" id="1.10.287.610">
    <property type="entry name" value="Helix hairpin bin"/>
    <property type="match status" value="1"/>
</dbReference>
<dbReference type="HAMAP" id="MF_00291_B">
    <property type="entry name" value="Ribosomal_uS2_B"/>
    <property type="match status" value="1"/>
</dbReference>
<dbReference type="InterPro" id="IPR001865">
    <property type="entry name" value="Ribosomal_uS2"/>
</dbReference>
<dbReference type="InterPro" id="IPR005706">
    <property type="entry name" value="Ribosomal_uS2_bac/mit/plastid"/>
</dbReference>
<dbReference type="InterPro" id="IPR018130">
    <property type="entry name" value="Ribosomal_uS2_CS"/>
</dbReference>
<dbReference type="InterPro" id="IPR023591">
    <property type="entry name" value="Ribosomal_uS2_flav_dom_sf"/>
</dbReference>
<dbReference type="NCBIfam" id="TIGR01011">
    <property type="entry name" value="rpsB_bact"/>
    <property type="match status" value="1"/>
</dbReference>
<dbReference type="PANTHER" id="PTHR12534">
    <property type="entry name" value="30S RIBOSOMAL PROTEIN S2 PROKARYOTIC AND ORGANELLAR"/>
    <property type="match status" value="1"/>
</dbReference>
<dbReference type="PANTHER" id="PTHR12534:SF0">
    <property type="entry name" value="SMALL RIBOSOMAL SUBUNIT PROTEIN US2M"/>
    <property type="match status" value="1"/>
</dbReference>
<dbReference type="Pfam" id="PF00318">
    <property type="entry name" value="Ribosomal_S2"/>
    <property type="match status" value="1"/>
</dbReference>
<dbReference type="PRINTS" id="PR00395">
    <property type="entry name" value="RIBOSOMALS2"/>
</dbReference>
<dbReference type="SUPFAM" id="SSF52313">
    <property type="entry name" value="Ribosomal protein S2"/>
    <property type="match status" value="1"/>
</dbReference>
<dbReference type="PROSITE" id="PS00962">
    <property type="entry name" value="RIBOSOMAL_S2_1"/>
    <property type="match status" value="1"/>
</dbReference>
<dbReference type="PROSITE" id="PS00963">
    <property type="entry name" value="RIBOSOMAL_S2_2"/>
    <property type="match status" value="1"/>
</dbReference>
<protein>
    <recommendedName>
        <fullName evidence="1">Small ribosomal subunit protein uS2</fullName>
    </recommendedName>
    <alternativeName>
        <fullName evidence="3">30S ribosomal protein S2</fullName>
    </alternativeName>
</protein>
<sequence length="254" mass="28064">MANKIEVKELLEAGVHFGHMTRKWDPNMAPYIYMERNGIHIINLYKTAAKIEEANEALKKIAASGRKILFVATKKQAKDIVADKAKAANMPYITERWPGGMLTNFVTIRKAVKKMSSIDKMKKDGTFNTLSKKERLQVDRLRAKLEKNLGSIADMSRLPAALFVVDIKAEHIAIKEAQKLNIPVFAMVDTNSDPREVDYVIPANDDASKSIDKILSLVTTAVIEGLSDRGAEKEVEAAEEAPAAEAEAAPATEE</sequence>